<dbReference type="EMBL" id="CY014680">
    <property type="protein sequence ID" value="ABI84547.1"/>
    <property type="molecule type" value="Genomic_RNA"/>
</dbReference>
<dbReference type="SMR" id="Q0A436"/>
<dbReference type="Proteomes" id="UP000155465">
    <property type="component" value="Genome"/>
</dbReference>
<dbReference type="GO" id="GO:0020002">
    <property type="term" value="C:host cell plasma membrane"/>
    <property type="evidence" value="ECO:0007669"/>
    <property type="project" value="UniProtKB-SubCell"/>
</dbReference>
<dbReference type="GO" id="GO:0016020">
    <property type="term" value="C:membrane"/>
    <property type="evidence" value="ECO:0007669"/>
    <property type="project" value="UniProtKB-UniRule"/>
</dbReference>
<dbReference type="GO" id="GO:0055036">
    <property type="term" value="C:virion membrane"/>
    <property type="evidence" value="ECO:0007669"/>
    <property type="project" value="UniProtKB-SubCell"/>
</dbReference>
<dbReference type="GO" id="GO:0005216">
    <property type="term" value="F:monoatomic ion channel activity"/>
    <property type="evidence" value="ECO:0007669"/>
    <property type="project" value="UniProtKB-UniRule"/>
</dbReference>
<dbReference type="GO" id="GO:0015078">
    <property type="term" value="F:proton transmembrane transporter activity"/>
    <property type="evidence" value="ECO:0007669"/>
    <property type="project" value="UniProtKB-UniRule"/>
</dbReference>
<dbReference type="GO" id="GO:0051259">
    <property type="term" value="P:protein complex oligomerization"/>
    <property type="evidence" value="ECO:0007669"/>
    <property type="project" value="UniProtKB-UniRule"/>
</dbReference>
<dbReference type="GO" id="GO:0044694">
    <property type="term" value="P:symbiont genome entry into host cell via pore formation in plasma membrane"/>
    <property type="evidence" value="ECO:0007669"/>
    <property type="project" value="UniProtKB-UniRule"/>
</dbReference>
<dbReference type="GO" id="GO:0140321">
    <property type="term" value="P:symbiont-mediated suppression of host autophagy"/>
    <property type="evidence" value="ECO:0007669"/>
    <property type="project" value="UniProtKB-KW"/>
</dbReference>
<dbReference type="Gene3D" id="6.10.250.1640">
    <property type="match status" value="1"/>
</dbReference>
<dbReference type="HAMAP" id="MF_04069">
    <property type="entry name" value="INFV_M2"/>
    <property type="match status" value="1"/>
</dbReference>
<dbReference type="InterPro" id="IPR002089">
    <property type="entry name" value="Flu_M2"/>
</dbReference>
<dbReference type="Pfam" id="PF00599">
    <property type="entry name" value="Flu_M2"/>
    <property type="match status" value="1"/>
</dbReference>
<protein>
    <recommendedName>
        <fullName evidence="1">Matrix protein 2</fullName>
    </recommendedName>
    <alternativeName>
        <fullName evidence="1">Proton channel protein M2</fullName>
    </alternativeName>
</protein>
<sequence>MSLLTEVETPIRNGWECRCSDSSDPLVIAASIIGILHLILWILDRLFFKCISRRLKYGLKRGPSTEGVPESMREEYRQEQQSAVDVDDGHFVNIELE</sequence>
<feature type="chain" id="PRO_0000326339" description="Matrix protein 2">
    <location>
        <begin position="1"/>
        <end position="97"/>
    </location>
</feature>
<feature type="topological domain" description="Virion surface" evidence="1">
    <location>
        <begin position="1"/>
        <end position="22"/>
    </location>
</feature>
<feature type="transmembrane region" description="Helical; Signal-anchor for type III membrane protein" evidence="1">
    <location>
        <begin position="23"/>
        <end position="43"/>
    </location>
</feature>
<feature type="topological domain" description="Intravirion" evidence="1">
    <location>
        <begin position="44"/>
        <end position="97"/>
    </location>
</feature>
<feature type="region of interest" description="Disordered" evidence="2">
    <location>
        <begin position="59"/>
        <end position="83"/>
    </location>
</feature>
<feature type="site" description="Essential for channel activity, possibly by being protonated during channel activation, and by forming the channel gate and the selective filter" evidence="1">
    <location>
        <position position="37"/>
    </location>
</feature>
<feature type="site" description="Seems to be involved in pH gating" evidence="1">
    <location>
        <position position="41"/>
    </location>
</feature>
<feature type="modified residue" description="Phosphoserine; by host" evidence="1">
    <location>
        <position position="64"/>
    </location>
</feature>
<feature type="modified residue" description="Phosphoserine; by host" evidence="1">
    <location>
        <position position="82"/>
    </location>
</feature>
<feature type="lipid moiety-binding region" description="S-palmitoyl cysteine; by host" evidence="1">
    <location>
        <position position="50"/>
    </location>
</feature>
<feature type="disulfide bond" description="Interchain (with C-17)" evidence="1">
    <location>
        <position position="17"/>
    </location>
</feature>
<feature type="disulfide bond" description="Interchain (with C-19)" evidence="1">
    <location>
        <position position="19"/>
    </location>
</feature>
<evidence type="ECO:0000255" key="1">
    <source>
        <dbReference type="HAMAP-Rule" id="MF_04069"/>
    </source>
</evidence>
<evidence type="ECO:0000256" key="2">
    <source>
        <dbReference type="SAM" id="MobiDB-lite"/>
    </source>
</evidence>
<gene>
    <name evidence="1" type="primary">M</name>
</gene>
<name>M2_I56A2</name>
<keyword id="KW-0025">Alternative splicing</keyword>
<keyword id="KW-1015">Disulfide bond</keyword>
<keyword id="KW-1032">Host cell membrane</keyword>
<keyword id="KW-1043">Host membrane</keyword>
<keyword id="KW-0945">Host-virus interaction</keyword>
<keyword id="KW-0375">Hydrogen ion transport</keyword>
<keyword id="KW-1083">Inhibition of host autophagy by virus</keyword>
<keyword id="KW-0407">Ion channel</keyword>
<keyword id="KW-0406">Ion transport</keyword>
<keyword id="KW-0449">Lipoprotein</keyword>
<keyword id="KW-0472">Membrane</keyword>
<keyword id="KW-0564">Palmitate</keyword>
<keyword id="KW-0597">Phosphoprotein</keyword>
<keyword id="KW-0735">Signal-anchor</keyword>
<keyword id="KW-0812">Transmembrane</keyword>
<keyword id="KW-1133">Transmembrane helix</keyword>
<keyword id="KW-0813">Transport</keyword>
<keyword id="KW-1182">Viral ion channel</keyword>
<keyword id="KW-0946">Virion</keyword>
<accession>Q0A436</accession>
<reference key="1">
    <citation type="journal article" date="2006" name="Science">
        <title>Large-scale sequence analysis of avian influenza isolates.</title>
        <authorList>
            <person name="Obenauer J.C."/>
            <person name="Denson J."/>
            <person name="Mehta P.K."/>
            <person name="Su X."/>
            <person name="Mukatira S."/>
            <person name="Finkelstein D.B."/>
            <person name="Xu X."/>
            <person name="Wang J."/>
            <person name="Ma J."/>
            <person name="Fan Y."/>
            <person name="Rakestraw K.M."/>
            <person name="Webster R.G."/>
            <person name="Hoffmann E."/>
            <person name="Krauss S."/>
            <person name="Zheng J."/>
            <person name="Zhang Z."/>
            <person name="Naeve C.W."/>
        </authorList>
    </citation>
    <scope>NUCLEOTIDE SEQUENCE [GENOMIC RNA]</scope>
</reference>
<comment type="function">
    <text evidence="1">Forms a proton-selective ion channel that is necessary for the efficient release of the viral genome during virus entry. After attaching to the cell surface, the virion enters the cell by endocytosis. Acidification of the endosome triggers M2 ion channel activity. The influx of protons into virion interior is believed to disrupt interactions between the viral ribonucleoprotein (RNP), matrix protein 1 (M1), and lipid bilayers, thereby freeing the viral genome from interaction with viral proteins and enabling RNA segments to migrate to the host cell nucleus, where influenza virus RNA transcription and replication occur. Also plays a role in viral proteins secretory pathway. Elevates the intravesicular pH of normally acidic compartments, such as trans-Golgi network, preventing newly formed hemagglutinin from premature switching to the fusion-active conformation.</text>
</comment>
<comment type="activity regulation">
    <text>The M2 protein from most influenza A strains is inhibited by amantadine and rimantadine, resulting in viral uncoating incapacity. Emergence of amantadine-resistant variants is usually rapid.</text>
</comment>
<comment type="subunit">
    <text evidence="1">Homotetramer; composed of two disulfide-linked dimers held together by non-covalent interactions. May interact with matrix protein 1.</text>
</comment>
<comment type="subcellular location">
    <subcellularLocation>
        <location evidence="1">Virion membrane</location>
    </subcellularLocation>
    <subcellularLocation>
        <location evidence="1">Host apical cell membrane</location>
        <topology evidence="1">Single-pass type III membrane protein</topology>
    </subcellularLocation>
    <text evidence="1">Abundantly expressed at the apical plasma membrane in infected polarized epithelial cells, in close proximity to budding and assembled virions. Minor component of virions (only 16-20 molecules/virion).</text>
</comment>
<comment type="alternative products">
    <event type="alternative splicing"/>
    <isoform>
        <id>Q0A436-1</id>
        <name>M2</name>
        <sequence type="displayed"/>
    </isoform>
    <isoform>
        <id>Q0A435-1</id>
        <name>M1</name>
        <sequence type="external"/>
    </isoform>
    <text>Only the first 9 residues are shared by the 2 isoforms.</text>
</comment>
<comment type="domain">
    <text evidence="1">Cytoplasmic tail plays an important role in virion assembly and morphogenesis.</text>
</comment>
<comment type="miscellaneous">
    <text evidence="1">When the channel is activated, one or more imidazole moieties of His-37 probably become bi-protonated.</text>
</comment>
<comment type="similarity">
    <text evidence="1">Belongs to the influenza viruses matrix protein M2 family.</text>
</comment>
<organism>
    <name type="scientific">Influenza A virus (strain A/Duck/England/1/1956 H11N6)</name>
    <dbReference type="NCBI Taxonomy" id="383550"/>
    <lineage>
        <taxon>Viruses</taxon>
        <taxon>Riboviria</taxon>
        <taxon>Orthornavirae</taxon>
        <taxon>Negarnaviricota</taxon>
        <taxon>Polyploviricotina</taxon>
        <taxon>Insthoviricetes</taxon>
        <taxon>Articulavirales</taxon>
        <taxon>Orthomyxoviridae</taxon>
        <taxon>Alphainfluenzavirus</taxon>
        <taxon>Alphainfluenzavirus influenzae</taxon>
        <taxon>Influenza A virus</taxon>
    </lineage>
</organism>
<proteinExistence type="inferred from homology"/>
<organismHost>
    <name type="scientific">Aves</name>
    <dbReference type="NCBI Taxonomy" id="8782"/>
</organismHost>